<gene>
    <name type="primary">pre</name>
    <name type="synonym">mob</name>
</gene>
<keyword id="KW-0002">3D-structure</keyword>
<keyword id="KW-0238">DNA-binding</keyword>
<keyword id="KW-0614">Plasmid</keyword>
<comment type="function">
    <text>The interaction of the RSA site and the PRE protein may not only serves a function in plasmid maintenance, but may also contributes to the distribution of small antibiotic resistance plasmids among Gram-positive bacteria.</text>
</comment>
<comment type="miscellaneous">
    <text>Contains conserved positively charged amino acids probably involved in the binding of the pre protein to the RSA site.</text>
</comment>
<comment type="similarity">
    <text evidence="2">Belongs to the plasmid mobilization pre family.</text>
</comment>
<accession>P13925</accession>
<name>PRE_STRAG</name>
<proteinExistence type="evidence at protein level"/>
<protein>
    <recommendedName>
        <fullName>Plasmid recombination enzyme</fullName>
    </recommendedName>
    <alternativeName>
        <fullName>Mobilization protein</fullName>
    </alternativeName>
</protein>
<evidence type="ECO:0000255" key="1"/>
<evidence type="ECO:0000305" key="2"/>
<evidence type="ECO:0007829" key="3">
    <source>
        <dbReference type="PDB" id="4LVI"/>
    </source>
</evidence>
<evidence type="ECO:0007829" key="4">
    <source>
        <dbReference type="PDB" id="4LVK"/>
    </source>
</evidence>
<evidence type="ECO:0007829" key="5">
    <source>
        <dbReference type="PDB" id="4LVL"/>
    </source>
</evidence>
<evidence type="ECO:0007829" key="6">
    <source>
        <dbReference type="PDB" id="4LVM"/>
    </source>
</evidence>
<geneLocation type="plasmid">
    <name>pMV158</name>
</geneLocation>
<dbReference type="EMBL" id="X15669">
    <property type="protein sequence ID" value="CAA33713.1"/>
    <property type="molecule type" value="Genomic_DNA"/>
</dbReference>
<dbReference type="EMBL" id="M28538">
    <property type="protein sequence ID" value="AAA25387.1"/>
    <property type="molecule type" value="Genomic_DNA"/>
</dbReference>
<dbReference type="PIR" id="A33952">
    <property type="entry name" value="A33952"/>
</dbReference>
<dbReference type="PIR" id="S10134">
    <property type="entry name" value="S10134"/>
</dbReference>
<dbReference type="RefSeq" id="WP_012218462.1">
    <property type="nucleotide sequence ID" value="NC_010096.1"/>
</dbReference>
<dbReference type="RefSeq" id="YP_001586274.1">
    <property type="nucleotide sequence ID" value="NC_010096.1"/>
</dbReference>
<dbReference type="PDB" id="4LVI">
    <property type="method" value="X-ray"/>
    <property type="resolution" value="1.90 A"/>
    <property type="chains" value="A=2-199"/>
</dbReference>
<dbReference type="PDB" id="4LVJ">
    <property type="method" value="X-ray"/>
    <property type="resolution" value="2.17 A"/>
    <property type="chains" value="A=2-199"/>
</dbReference>
<dbReference type="PDB" id="4LVK">
    <property type="method" value="X-ray"/>
    <property type="resolution" value="2.37 A"/>
    <property type="chains" value="A=2-199"/>
</dbReference>
<dbReference type="PDB" id="4LVL">
    <property type="method" value="X-ray"/>
    <property type="resolution" value="2.20 A"/>
    <property type="chains" value="A=2-199"/>
</dbReference>
<dbReference type="PDB" id="4LVM">
    <property type="method" value="X-ray"/>
    <property type="resolution" value="3.10 A"/>
    <property type="chains" value="A/C=2-199"/>
</dbReference>
<dbReference type="PDB" id="5N2Q">
    <property type="method" value="X-ray"/>
    <property type="resolution" value="2.00 A"/>
    <property type="chains" value="A=2-198"/>
</dbReference>
<dbReference type="PDBsum" id="4LVI"/>
<dbReference type="PDBsum" id="4LVJ"/>
<dbReference type="PDBsum" id="4LVK"/>
<dbReference type="PDBsum" id="4LVL"/>
<dbReference type="PDBsum" id="4LVM"/>
<dbReference type="PDBsum" id="5N2Q"/>
<dbReference type="SMR" id="P13925"/>
<dbReference type="EvolutionaryTrace" id="P13925"/>
<dbReference type="GO" id="GO:0003677">
    <property type="term" value="F:DNA binding"/>
    <property type="evidence" value="ECO:0007669"/>
    <property type="project" value="UniProtKB-KW"/>
</dbReference>
<dbReference type="GO" id="GO:0006310">
    <property type="term" value="P:DNA recombination"/>
    <property type="evidence" value="ECO:0007669"/>
    <property type="project" value="InterPro"/>
</dbReference>
<dbReference type="CDD" id="cd17242">
    <property type="entry name" value="MobM_relaxase"/>
    <property type="match status" value="1"/>
</dbReference>
<dbReference type="Gene3D" id="3.30.930.30">
    <property type="match status" value="1"/>
</dbReference>
<dbReference type="InterPro" id="IPR001668">
    <property type="entry name" value="Mob_Pre"/>
</dbReference>
<dbReference type="NCBIfam" id="NF041497">
    <property type="entry name" value="MobV"/>
    <property type="match status" value="1"/>
</dbReference>
<dbReference type="Pfam" id="PF01076">
    <property type="entry name" value="Mob_Pre"/>
    <property type="match status" value="1"/>
</dbReference>
<feature type="chain" id="PRO_0000068425" description="Plasmid recombination enzyme">
    <location>
        <begin position="1"/>
        <end position="494"/>
    </location>
</feature>
<feature type="binding site" evidence="1">
    <location>
        <position position="44"/>
    </location>
    <ligand>
        <name>DNA</name>
        <dbReference type="ChEBI" id="CHEBI:16991"/>
    </ligand>
</feature>
<feature type="binding site" evidence="1">
    <location>
        <position position="115"/>
    </location>
    <ligand>
        <name>DNA</name>
        <dbReference type="ChEBI" id="CHEBI:16991"/>
    </ligand>
</feature>
<feature type="sequence conflict" description="In Ref. 2; AAA25387." evidence="2" ref="2">
    <original>P</original>
    <variation>L</variation>
    <location>
        <position position="213"/>
    </location>
</feature>
<feature type="strand" evidence="3">
    <location>
        <begin position="5"/>
        <end position="11"/>
    </location>
</feature>
<feature type="helix" evidence="3">
    <location>
        <begin position="13"/>
        <end position="23"/>
    </location>
</feature>
<feature type="strand" evidence="5">
    <location>
        <begin position="27"/>
        <end position="29"/>
    </location>
</feature>
<feature type="helix" evidence="3">
    <location>
        <begin position="37"/>
        <end position="42"/>
    </location>
</feature>
<feature type="strand" evidence="4">
    <location>
        <begin position="44"/>
        <end position="47"/>
    </location>
</feature>
<feature type="strand" evidence="6">
    <location>
        <begin position="51"/>
        <end position="53"/>
    </location>
</feature>
<feature type="helix" evidence="3">
    <location>
        <begin position="55"/>
        <end position="66"/>
    </location>
</feature>
<feature type="strand" evidence="3">
    <location>
        <begin position="80"/>
        <end position="86"/>
    </location>
</feature>
<feature type="helix" evidence="3">
    <location>
        <begin position="89"/>
        <end position="93"/>
    </location>
</feature>
<feature type="helix" evidence="3">
    <location>
        <begin position="97"/>
        <end position="115"/>
    </location>
</feature>
<feature type="helix" evidence="3">
    <location>
        <begin position="117"/>
        <end position="119"/>
    </location>
</feature>
<feature type="strand" evidence="3">
    <location>
        <begin position="120"/>
        <end position="126"/>
    </location>
</feature>
<feature type="strand" evidence="3">
    <location>
        <begin position="128"/>
        <end position="131"/>
    </location>
</feature>
<feature type="strand" evidence="3">
    <location>
        <begin position="133"/>
        <end position="138"/>
    </location>
</feature>
<feature type="helix" evidence="3">
    <location>
        <begin position="148"/>
        <end position="151"/>
    </location>
</feature>
<feature type="helix" evidence="3">
    <location>
        <begin position="154"/>
        <end position="170"/>
    </location>
</feature>
<feature type="helix" evidence="3">
    <location>
        <begin position="189"/>
        <end position="194"/>
    </location>
</feature>
<feature type="turn" evidence="6">
    <location>
        <begin position="195"/>
        <end position="197"/>
    </location>
</feature>
<organism>
    <name type="scientific">Streptococcus agalactiae</name>
    <dbReference type="NCBI Taxonomy" id="1311"/>
    <lineage>
        <taxon>Bacteria</taxon>
        <taxon>Bacillati</taxon>
        <taxon>Bacillota</taxon>
        <taxon>Bacilli</taxon>
        <taxon>Lactobacillales</taxon>
        <taxon>Streptococcaceae</taxon>
        <taxon>Streptococcus</taxon>
    </lineage>
</organism>
<sequence length="494" mass="57859">MSYMVARMQKMKAGNLGGAFKHNERVFETHSNKDINPSRSHLNYELTDRDRSVSYEKQIKDYVNENKVSNRAIRKDAVLCDEWIITSDKDFFEKLDEEQTRTFFETAKNYFAENYGESNIAYASVHLDESTPHMHMGVVPFENGKLSSKAMFDREELKHIQEDLPRYMSDHGFELERGKLNSEAKHKTVAEFKRAMADMELKEELLEKYHAPPFVDERTGELNNDTEAFWHEKEFADMFEVQSPIRETTNQEKMDWLRKQYQEELKKLESSKKPLEDDLSHLEELLDKKTKEYIKIDSEASERASELSKAEGYINTLENHSKSLEAKIECLESDNLQLEKQKATKLEAKALNESELRELKPKKNFLGKEHYELSPEQFEGLKAEVYRSRTLLHHKDIELEQAKRQVSLRASKNYFTASLERAKEKAKGESIDRLKSEIKRLKNENSILRQQNDKMLGKLRELMPDKAFKNLLSELKAIKPIVNIIKKAIEKSLF</sequence>
<reference key="1">
    <citation type="journal article" date="1989" name="Nucleic Acids Res.">
        <title>Similarity of minus origins of replication and flanking open reading frames of plasmids pUB110, pTB913 and pMV158.</title>
        <authorList>
            <person name="van der Lelie D."/>
            <person name="Bron S."/>
            <person name="Venema G."/>
            <person name="Oskam L."/>
        </authorList>
    </citation>
    <scope>NUCLEOTIDE SEQUENCE [GENOMIC DNA]</scope>
</reference>
<reference key="2">
    <citation type="journal article" date="1989" name="J. Bacteriol.">
        <title>Region of the streptococcal plasmid pMV158 required for conjugative mobilization.</title>
        <authorList>
            <person name="Priebe S.D."/>
            <person name="Lacks S.A."/>
        </authorList>
    </citation>
    <scope>NUCLEOTIDE SEQUENCE [GENOMIC DNA]</scope>
</reference>